<accession>A8A3L2</accession>
<evidence type="ECO:0000255" key="1">
    <source>
        <dbReference type="HAMAP-Rule" id="MF_00096"/>
    </source>
</evidence>
<reference key="1">
    <citation type="journal article" date="2008" name="J. Bacteriol.">
        <title>The pangenome structure of Escherichia coli: comparative genomic analysis of E. coli commensal and pathogenic isolates.</title>
        <authorList>
            <person name="Rasko D.A."/>
            <person name="Rosovitz M.J."/>
            <person name="Myers G.S.A."/>
            <person name="Mongodin E.F."/>
            <person name="Fricke W.F."/>
            <person name="Gajer P."/>
            <person name="Crabtree J."/>
            <person name="Sebaihia M."/>
            <person name="Thomson N.R."/>
            <person name="Chaudhuri R."/>
            <person name="Henderson I.R."/>
            <person name="Sperandio V."/>
            <person name="Ravel J."/>
        </authorList>
    </citation>
    <scope>NUCLEOTIDE SEQUENCE [LARGE SCALE GENOMIC DNA]</scope>
    <source>
        <strain>HS</strain>
    </source>
</reference>
<organism>
    <name type="scientific">Escherichia coli O9:H4 (strain HS)</name>
    <dbReference type="NCBI Taxonomy" id="331112"/>
    <lineage>
        <taxon>Bacteria</taxon>
        <taxon>Pseudomonadati</taxon>
        <taxon>Pseudomonadota</taxon>
        <taxon>Gammaproteobacteria</taxon>
        <taxon>Enterobacterales</taxon>
        <taxon>Enterobacteriaceae</taxon>
        <taxon>Escherichia</taxon>
    </lineage>
</organism>
<dbReference type="EMBL" id="CP000802">
    <property type="protein sequence ID" value="ABV07116.1"/>
    <property type="molecule type" value="Genomic_DNA"/>
</dbReference>
<dbReference type="RefSeq" id="WP_001272928.1">
    <property type="nucleotide sequence ID" value="NC_009800.1"/>
</dbReference>
<dbReference type="SMR" id="A8A3L2"/>
<dbReference type="KEGG" id="ecx:EcHS_A2871"/>
<dbReference type="HOGENOM" id="CLU_002472_4_0_6"/>
<dbReference type="GO" id="GO:0005829">
    <property type="term" value="C:cytosol"/>
    <property type="evidence" value="ECO:0007669"/>
    <property type="project" value="TreeGrafter"/>
</dbReference>
<dbReference type="GO" id="GO:0005524">
    <property type="term" value="F:ATP binding"/>
    <property type="evidence" value="ECO:0007669"/>
    <property type="project" value="UniProtKB-UniRule"/>
</dbReference>
<dbReference type="GO" id="GO:0140664">
    <property type="term" value="F:ATP-dependent DNA damage sensor activity"/>
    <property type="evidence" value="ECO:0007669"/>
    <property type="project" value="InterPro"/>
</dbReference>
<dbReference type="GO" id="GO:0003684">
    <property type="term" value="F:damaged DNA binding"/>
    <property type="evidence" value="ECO:0007669"/>
    <property type="project" value="UniProtKB-UniRule"/>
</dbReference>
<dbReference type="GO" id="GO:0030983">
    <property type="term" value="F:mismatched DNA binding"/>
    <property type="evidence" value="ECO:0007669"/>
    <property type="project" value="InterPro"/>
</dbReference>
<dbReference type="GO" id="GO:0006298">
    <property type="term" value="P:mismatch repair"/>
    <property type="evidence" value="ECO:0007669"/>
    <property type="project" value="UniProtKB-UniRule"/>
</dbReference>
<dbReference type="CDD" id="cd03284">
    <property type="entry name" value="ABC_MutS1"/>
    <property type="match status" value="1"/>
</dbReference>
<dbReference type="FunFam" id="1.10.1420.10:FF:000002">
    <property type="entry name" value="DNA mismatch repair protein MutS"/>
    <property type="match status" value="1"/>
</dbReference>
<dbReference type="FunFam" id="3.30.420.110:FF:000001">
    <property type="entry name" value="DNA mismatch repair protein MutS"/>
    <property type="match status" value="1"/>
</dbReference>
<dbReference type="FunFam" id="3.40.1170.10:FF:000001">
    <property type="entry name" value="DNA mismatch repair protein MutS"/>
    <property type="match status" value="1"/>
</dbReference>
<dbReference type="FunFam" id="3.40.50.300:FF:000283">
    <property type="entry name" value="DNA mismatch repair protein MutS"/>
    <property type="match status" value="1"/>
</dbReference>
<dbReference type="Gene3D" id="1.10.1420.10">
    <property type="match status" value="2"/>
</dbReference>
<dbReference type="Gene3D" id="6.10.140.430">
    <property type="match status" value="1"/>
</dbReference>
<dbReference type="Gene3D" id="3.40.1170.10">
    <property type="entry name" value="DNA repair protein MutS, domain I"/>
    <property type="match status" value="1"/>
</dbReference>
<dbReference type="Gene3D" id="3.30.420.110">
    <property type="entry name" value="MutS, connector domain"/>
    <property type="match status" value="1"/>
</dbReference>
<dbReference type="Gene3D" id="3.40.50.300">
    <property type="entry name" value="P-loop containing nucleotide triphosphate hydrolases"/>
    <property type="match status" value="1"/>
</dbReference>
<dbReference type="HAMAP" id="MF_00096">
    <property type="entry name" value="MutS"/>
    <property type="match status" value="1"/>
</dbReference>
<dbReference type="InterPro" id="IPR005748">
    <property type="entry name" value="DNA_mismatch_repair_MutS"/>
</dbReference>
<dbReference type="InterPro" id="IPR007695">
    <property type="entry name" value="DNA_mismatch_repair_MutS-lik_N"/>
</dbReference>
<dbReference type="InterPro" id="IPR017261">
    <property type="entry name" value="DNA_mismatch_repair_MutS/MSH"/>
</dbReference>
<dbReference type="InterPro" id="IPR000432">
    <property type="entry name" value="DNA_mismatch_repair_MutS_C"/>
</dbReference>
<dbReference type="InterPro" id="IPR007861">
    <property type="entry name" value="DNA_mismatch_repair_MutS_clamp"/>
</dbReference>
<dbReference type="InterPro" id="IPR007696">
    <property type="entry name" value="DNA_mismatch_repair_MutS_core"/>
</dbReference>
<dbReference type="InterPro" id="IPR016151">
    <property type="entry name" value="DNA_mismatch_repair_MutS_N"/>
</dbReference>
<dbReference type="InterPro" id="IPR036187">
    <property type="entry name" value="DNA_mismatch_repair_MutS_sf"/>
</dbReference>
<dbReference type="InterPro" id="IPR007860">
    <property type="entry name" value="DNA_mmatch_repair_MutS_con_dom"/>
</dbReference>
<dbReference type="InterPro" id="IPR045076">
    <property type="entry name" value="MutS"/>
</dbReference>
<dbReference type="InterPro" id="IPR036678">
    <property type="entry name" value="MutS_con_dom_sf"/>
</dbReference>
<dbReference type="InterPro" id="IPR027417">
    <property type="entry name" value="P-loop_NTPase"/>
</dbReference>
<dbReference type="NCBIfam" id="TIGR01070">
    <property type="entry name" value="mutS1"/>
    <property type="match status" value="1"/>
</dbReference>
<dbReference type="NCBIfam" id="NF003810">
    <property type="entry name" value="PRK05399.1"/>
    <property type="match status" value="1"/>
</dbReference>
<dbReference type="PANTHER" id="PTHR11361:SF34">
    <property type="entry name" value="DNA MISMATCH REPAIR PROTEIN MSH1, MITOCHONDRIAL"/>
    <property type="match status" value="1"/>
</dbReference>
<dbReference type="PANTHER" id="PTHR11361">
    <property type="entry name" value="DNA MISMATCH REPAIR PROTEIN MUTS FAMILY MEMBER"/>
    <property type="match status" value="1"/>
</dbReference>
<dbReference type="Pfam" id="PF01624">
    <property type="entry name" value="MutS_I"/>
    <property type="match status" value="1"/>
</dbReference>
<dbReference type="Pfam" id="PF05188">
    <property type="entry name" value="MutS_II"/>
    <property type="match status" value="1"/>
</dbReference>
<dbReference type="Pfam" id="PF05192">
    <property type="entry name" value="MutS_III"/>
    <property type="match status" value="1"/>
</dbReference>
<dbReference type="Pfam" id="PF05190">
    <property type="entry name" value="MutS_IV"/>
    <property type="match status" value="1"/>
</dbReference>
<dbReference type="Pfam" id="PF00488">
    <property type="entry name" value="MutS_V"/>
    <property type="match status" value="1"/>
</dbReference>
<dbReference type="PIRSF" id="PIRSF037677">
    <property type="entry name" value="DNA_mis_repair_Msh6"/>
    <property type="match status" value="1"/>
</dbReference>
<dbReference type="SMART" id="SM00534">
    <property type="entry name" value="MUTSac"/>
    <property type="match status" value="1"/>
</dbReference>
<dbReference type="SMART" id="SM00533">
    <property type="entry name" value="MUTSd"/>
    <property type="match status" value="1"/>
</dbReference>
<dbReference type="SUPFAM" id="SSF55271">
    <property type="entry name" value="DNA repair protein MutS, domain I"/>
    <property type="match status" value="1"/>
</dbReference>
<dbReference type="SUPFAM" id="SSF53150">
    <property type="entry name" value="DNA repair protein MutS, domain II"/>
    <property type="match status" value="1"/>
</dbReference>
<dbReference type="SUPFAM" id="SSF48334">
    <property type="entry name" value="DNA repair protein MutS, domain III"/>
    <property type="match status" value="1"/>
</dbReference>
<dbReference type="SUPFAM" id="SSF52540">
    <property type="entry name" value="P-loop containing nucleoside triphosphate hydrolases"/>
    <property type="match status" value="1"/>
</dbReference>
<dbReference type="PROSITE" id="PS00486">
    <property type="entry name" value="DNA_MISMATCH_REPAIR_2"/>
    <property type="match status" value="1"/>
</dbReference>
<comment type="function">
    <text evidence="1">This protein is involved in the repair of mismatches in DNA. It is possible that it carries out the mismatch recognition step. This protein has a weak ATPase activity.</text>
</comment>
<comment type="similarity">
    <text evidence="1">Belongs to the DNA mismatch repair MutS family.</text>
</comment>
<gene>
    <name evidence="1" type="primary">mutS</name>
    <name type="ordered locus">EcHS_A2871</name>
</gene>
<name>MUTS_ECOHS</name>
<protein>
    <recommendedName>
        <fullName evidence="1">DNA mismatch repair protein MutS</fullName>
    </recommendedName>
</protein>
<proteinExistence type="inferred from homology"/>
<feature type="chain" id="PRO_1000057634" description="DNA mismatch repair protein MutS">
    <location>
        <begin position="1"/>
        <end position="853"/>
    </location>
</feature>
<feature type="binding site" evidence="1">
    <location>
        <begin position="614"/>
        <end position="621"/>
    </location>
    <ligand>
        <name>ATP</name>
        <dbReference type="ChEBI" id="CHEBI:30616"/>
    </ligand>
</feature>
<sequence length="853" mass="95247">MSAIENFDAHTPMMQQYLRLKAQHPEILLFYRMGDFYELFYDDAKRASQLLDISLTKRGASAGEPIPMAGIPYHAVENYLAKLVNQGESVAICEQIGDPATSKGPVERKVVRIVTPGTISDEALLQERQDNLLAAIWQDSKGFGYATLDISSGRFRLSEPADRETMAAELQRTNPAELLYAEDFAEMSLIEGRRGLRRRPLWEFEIDTARQQLNLQFGTRDLVGFGVENAPRGLCAAGCLLQYAKDTQRTTLPHIRSITMEREQDSIIMDAATRRNLEITQNLAGGAENTLASVLDCTVTPMGSRMLKRWLHMPVRDTRVLLERQQTIGALQDFTAGLQPVLRQVGDLERILARLALRTARPRDLARMRHAFQQLPELRAQLETVDSAPVQALREKMGEFAELRDLLERAIIDTPPVLVRDGGVIASGYNEELDEWRALADGATDYLERLEVRERERTGLDTLKVGFNAVHGYYIQISRGQSHLAPINYMRRQTLKNAERYIIPELKEYEDKVLTSKGKALALEKQLYEELFDLLLPHLEALQQSASALAELDVLVNLAERAYTLNYTCPTFIDKPGIRITEGRHPVVEQVLNEPFIANPLNLSPQRRMLIITGPNMGGKSTYMRQTALIALMAYIGSYVPAQKVEIGPIDRIFTRVGAADDLASGRSTFMVEMTETANILHNATEYSLVLMDEIGRGTSTYDGLSLAWACAENLANKIKALTLFATHYFELTQLPEKMEGVANVHLDALEHGDTIAFMHSVQDGAASKSYGLAVAALAGVPKEVIKRARQKLRELESISPNAAATQVDGTQMSLLSVPEETSPAVEALENLDPDSLTPRQALEWIYRLKSLV</sequence>
<keyword id="KW-0067">ATP-binding</keyword>
<keyword id="KW-0227">DNA damage</keyword>
<keyword id="KW-0234">DNA repair</keyword>
<keyword id="KW-0238">DNA-binding</keyword>
<keyword id="KW-0547">Nucleotide-binding</keyword>